<protein>
    <recommendedName>
        <fullName evidence="1">2-C-methyl-D-erythritol 2,4-cyclodiphosphate synthase</fullName>
        <shortName evidence="1">MECDP-synthase</shortName>
        <shortName evidence="1">MECPP-synthase</shortName>
        <shortName evidence="1">MECPS</shortName>
        <ecNumber evidence="1">4.6.1.12</ecNumber>
    </recommendedName>
</protein>
<comment type="function">
    <text evidence="1">Involved in the biosynthesis of isopentenyl diphosphate (IPP) and dimethylallyl diphosphate (DMAPP), two major building blocks of isoprenoid compounds. Catalyzes the conversion of 4-diphosphocytidyl-2-C-methyl-D-erythritol 2-phosphate (CDP-ME2P) to 2-C-methyl-D-erythritol 2,4-cyclodiphosphate (ME-CPP) with a corresponding release of cytidine 5-monophosphate (CMP).</text>
</comment>
<comment type="catalytic activity">
    <reaction evidence="1">
        <text>4-CDP-2-C-methyl-D-erythritol 2-phosphate = 2-C-methyl-D-erythritol 2,4-cyclic diphosphate + CMP</text>
        <dbReference type="Rhea" id="RHEA:23864"/>
        <dbReference type="ChEBI" id="CHEBI:57919"/>
        <dbReference type="ChEBI" id="CHEBI:58483"/>
        <dbReference type="ChEBI" id="CHEBI:60377"/>
        <dbReference type="EC" id="4.6.1.12"/>
    </reaction>
</comment>
<comment type="cofactor">
    <cofactor evidence="1">
        <name>a divalent metal cation</name>
        <dbReference type="ChEBI" id="CHEBI:60240"/>
    </cofactor>
    <text evidence="1">Binds 1 divalent metal cation per subunit.</text>
</comment>
<comment type="pathway">
    <text evidence="1">Isoprenoid biosynthesis; isopentenyl diphosphate biosynthesis via DXP pathway; isopentenyl diphosphate from 1-deoxy-D-xylulose 5-phosphate: step 4/6.</text>
</comment>
<comment type="subunit">
    <text evidence="1">Homotrimer.</text>
</comment>
<comment type="similarity">
    <text evidence="1">Belongs to the IspF family.</text>
</comment>
<sequence length="159" mass="16926">MRIGHGFDVHAFGGEGPIIIGGVRIPYEKGLLAHSDGDVALHALTDALLGAAALGDIGKLFPDTDPTFKGADSRELLREAWRRIQAKGYALGNVDVTIIAQAPRMLPHIPQMRVFIAEDLGCHMDDVNVKATTTEKLGFTGRGEGIACEAVALLIKATK</sequence>
<gene>
    <name evidence="1" type="primary">ispF</name>
    <name type="ordered locus">ECS88_3016</name>
</gene>
<evidence type="ECO:0000255" key="1">
    <source>
        <dbReference type="HAMAP-Rule" id="MF_00107"/>
    </source>
</evidence>
<proteinExistence type="inferred from homology"/>
<name>ISPF_ECO45</name>
<organism>
    <name type="scientific">Escherichia coli O45:K1 (strain S88 / ExPEC)</name>
    <dbReference type="NCBI Taxonomy" id="585035"/>
    <lineage>
        <taxon>Bacteria</taxon>
        <taxon>Pseudomonadati</taxon>
        <taxon>Pseudomonadota</taxon>
        <taxon>Gammaproteobacteria</taxon>
        <taxon>Enterobacterales</taxon>
        <taxon>Enterobacteriaceae</taxon>
        <taxon>Escherichia</taxon>
    </lineage>
</organism>
<dbReference type="EC" id="4.6.1.12" evidence="1"/>
<dbReference type="EMBL" id="CU928161">
    <property type="protein sequence ID" value="CAR04261.1"/>
    <property type="molecule type" value="Genomic_DNA"/>
</dbReference>
<dbReference type="RefSeq" id="WP_001219247.1">
    <property type="nucleotide sequence ID" value="NC_011742.1"/>
</dbReference>
<dbReference type="SMR" id="B7MKM0"/>
<dbReference type="KEGG" id="ecz:ECS88_3016"/>
<dbReference type="HOGENOM" id="CLU_084630_2_0_6"/>
<dbReference type="UniPathway" id="UPA00056">
    <property type="reaction ID" value="UER00095"/>
</dbReference>
<dbReference type="Proteomes" id="UP000000747">
    <property type="component" value="Chromosome"/>
</dbReference>
<dbReference type="GO" id="GO:0008685">
    <property type="term" value="F:2-C-methyl-D-erythritol 2,4-cyclodiphosphate synthase activity"/>
    <property type="evidence" value="ECO:0007669"/>
    <property type="project" value="UniProtKB-UniRule"/>
</dbReference>
<dbReference type="GO" id="GO:0046872">
    <property type="term" value="F:metal ion binding"/>
    <property type="evidence" value="ECO:0007669"/>
    <property type="project" value="UniProtKB-KW"/>
</dbReference>
<dbReference type="GO" id="GO:0019288">
    <property type="term" value="P:isopentenyl diphosphate biosynthetic process, methylerythritol 4-phosphate pathway"/>
    <property type="evidence" value="ECO:0007669"/>
    <property type="project" value="UniProtKB-UniRule"/>
</dbReference>
<dbReference type="GO" id="GO:0016114">
    <property type="term" value="P:terpenoid biosynthetic process"/>
    <property type="evidence" value="ECO:0007669"/>
    <property type="project" value="InterPro"/>
</dbReference>
<dbReference type="CDD" id="cd00554">
    <property type="entry name" value="MECDP_synthase"/>
    <property type="match status" value="1"/>
</dbReference>
<dbReference type="FunFam" id="3.30.1330.50:FF:000001">
    <property type="entry name" value="2-C-methyl-D-erythritol 2,4-cyclodiphosphate synthase"/>
    <property type="match status" value="1"/>
</dbReference>
<dbReference type="Gene3D" id="3.30.1330.50">
    <property type="entry name" value="2-C-methyl-D-erythritol 2,4-cyclodiphosphate synthase"/>
    <property type="match status" value="1"/>
</dbReference>
<dbReference type="HAMAP" id="MF_00107">
    <property type="entry name" value="IspF"/>
    <property type="match status" value="1"/>
</dbReference>
<dbReference type="InterPro" id="IPR003526">
    <property type="entry name" value="MECDP_synthase"/>
</dbReference>
<dbReference type="InterPro" id="IPR020555">
    <property type="entry name" value="MECDP_synthase_CS"/>
</dbReference>
<dbReference type="InterPro" id="IPR036571">
    <property type="entry name" value="MECDP_synthase_sf"/>
</dbReference>
<dbReference type="NCBIfam" id="TIGR00151">
    <property type="entry name" value="ispF"/>
    <property type="match status" value="1"/>
</dbReference>
<dbReference type="PANTHER" id="PTHR43181">
    <property type="entry name" value="2-C-METHYL-D-ERYTHRITOL 2,4-CYCLODIPHOSPHATE SYNTHASE, CHLOROPLASTIC"/>
    <property type="match status" value="1"/>
</dbReference>
<dbReference type="PANTHER" id="PTHR43181:SF1">
    <property type="entry name" value="2-C-METHYL-D-ERYTHRITOL 2,4-CYCLODIPHOSPHATE SYNTHASE, CHLOROPLASTIC"/>
    <property type="match status" value="1"/>
</dbReference>
<dbReference type="Pfam" id="PF02542">
    <property type="entry name" value="YgbB"/>
    <property type="match status" value="1"/>
</dbReference>
<dbReference type="SUPFAM" id="SSF69765">
    <property type="entry name" value="IpsF-like"/>
    <property type="match status" value="1"/>
</dbReference>
<dbReference type="PROSITE" id="PS01350">
    <property type="entry name" value="ISPF"/>
    <property type="match status" value="1"/>
</dbReference>
<accession>B7MKM0</accession>
<keyword id="KW-0414">Isoprene biosynthesis</keyword>
<keyword id="KW-0456">Lyase</keyword>
<keyword id="KW-0479">Metal-binding</keyword>
<keyword id="KW-1185">Reference proteome</keyword>
<feature type="chain" id="PRO_1000117425" description="2-C-methyl-D-erythritol 2,4-cyclodiphosphate synthase">
    <location>
        <begin position="1"/>
        <end position="159"/>
    </location>
</feature>
<feature type="binding site" evidence="1">
    <location>
        <begin position="8"/>
        <end position="10"/>
    </location>
    <ligand>
        <name>4-CDP-2-C-methyl-D-erythritol 2-phosphate</name>
        <dbReference type="ChEBI" id="CHEBI:57919"/>
    </ligand>
</feature>
<feature type="binding site" evidence="1">
    <location>
        <position position="8"/>
    </location>
    <ligand>
        <name>a divalent metal cation</name>
        <dbReference type="ChEBI" id="CHEBI:60240"/>
    </ligand>
</feature>
<feature type="binding site" evidence="1">
    <location>
        <position position="10"/>
    </location>
    <ligand>
        <name>a divalent metal cation</name>
        <dbReference type="ChEBI" id="CHEBI:60240"/>
    </ligand>
</feature>
<feature type="binding site" evidence="1">
    <location>
        <begin position="34"/>
        <end position="35"/>
    </location>
    <ligand>
        <name>4-CDP-2-C-methyl-D-erythritol 2-phosphate</name>
        <dbReference type="ChEBI" id="CHEBI:57919"/>
    </ligand>
</feature>
<feature type="binding site" evidence="1">
    <location>
        <position position="42"/>
    </location>
    <ligand>
        <name>a divalent metal cation</name>
        <dbReference type="ChEBI" id="CHEBI:60240"/>
    </ligand>
</feature>
<feature type="binding site" evidence="1">
    <location>
        <begin position="56"/>
        <end position="58"/>
    </location>
    <ligand>
        <name>4-CDP-2-C-methyl-D-erythritol 2-phosphate</name>
        <dbReference type="ChEBI" id="CHEBI:57919"/>
    </ligand>
</feature>
<feature type="binding site" evidence="1">
    <location>
        <begin position="61"/>
        <end position="65"/>
    </location>
    <ligand>
        <name>4-CDP-2-C-methyl-D-erythritol 2-phosphate</name>
        <dbReference type="ChEBI" id="CHEBI:57919"/>
    </ligand>
</feature>
<feature type="binding site" evidence="1">
    <location>
        <begin position="100"/>
        <end position="106"/>
    </location>
    <ligand>
        <name>4-CDP-2-C-methyl-D-erythritol 2-phosphate</name>
        <dbReference type="ChEBI" id="CHEBI:57919"/>
    </ligand>
</feature>
<feature type="binding site" evidence="1">
    <location>
        <begin position="132"/>
        <end position="135"/>
    </location>
    <ligand>
        <name>4-CDP-2-C-methyl-D-erythritol 2-phosphate</name>
        <dbReference type="ChEBI" id="CHEBI:57919"/>
    </ligand>
</feature>
<feature type="binding site" evidence="1">
    <location>
        <position position="139"/>
    </location>
    <ligand>
        <name>4-CDP-2-C-methyl-D-erythritol 2-phosphate</name>
        <dbReference type="ChEBI" id="CHEBI:57919"/>
    </ligand>
</feature>
<feature type="binding site" evidence="1">
    <location>
        <position position="142"/>
    </location>
    <ligand>
        <name>4-CDP-2-C-methyl-D-erythritol 2-phosphate</name>
        <dbReference type="ChEBI" id="CHEBI:57919"/>
    </ligand>
</feature>
<feature type="site" description="Transition state stabilizer" evidence="1">
    <location>
        <position position="34"/>
    </location>
</feature>
<feature type="site" description="Transition state stabilizer" evidence="1">
    <location>
        <position position="133"/>
    </location>
</feature>
<reference key="1">
    <citation type="journal article" date="2009" name="PLoS Genet.">
        <title>Organised genome dynamics in the Escherichia coli species results in highly diverse adaptive paths.</title>
        <authorList>
            <person name="Touchon M."/>
            <person name="Hoede C."/>
            <person name="Tenaillon O."/>
            <person name="Barbe V."/>
            <person name="Baeriswyl S."/>
            <person name="Bidet P."/>
            <person name="Bingen E."/>
            <person name="Bonacorsi S."/>
            <person name="Bouchier C."/>
            <person name="Bouvet O."/>
            <person name="Calteau A."/>
            <person name="Chiapello H."/>
            <person name="Clermont O."/>
            <person name="Cruveiller S."/>
            <person name="Danchin A."/>
            <person name="Diard M."/>
            <person name="Dossat C."/>
            <person name="Karoui M.E."/>
            <person name="Frapy E."/>
            <person name="Garry L."/>
            <person name="Ghigo J.M."/>
            <person name="Gilles A.M."/>
            <person name="Johnson J."/>
            <person name="Le Bouguenec C."/>
            <person name="Lescat M."/>
            <person name="Mangenot S."/>
            <person name="Martinez-Jehanne V."/>
            <person name="Matic I."/>
            <person name="Nassif X."/>
            <person name="Oztas S."/>
            <person name="Petit M.A."/>
            <person name="Pichon C."/>
            <person name="Rouy Z."/>
            <person name="Ruf C.S."/>
            <person name="Schneider D."/>
            <person name="Tourret J."/>
            <person name="Vacherie B."/>
            <person name="Vallenet D."/>
            <person name="Medigue C."/>
            <person name="Rocha E.P.C."/>
            <person name="Denamur E."/>
        </authorList>
    </citation>
    <scope>NUCLEOTIDE SEQUENCE [LARGE SCALE GENOMIC DNA]</scope>
    <source>
        <strain>S88 / ExPEC</strain>
    </source>
</reference>